<dbReference type="EMBL" id="CP000301">
    <property type="protein sequence ID" value="ABD86056.1"/>
    <property type="molecule type" value="Genomic_DNA"/>
</dbReference>
<dbReference type="SMR" id="Q21C30"/>
<dbReference type="STRING" id="316056.RPC_0481"/>
<dbReference type="KEGG" id="rpc:RPC_0481"/>
<dbReference type="eggNOG" id="COG0858">
    <property type="taxonomic scope" value="Bacteria"/>
</dbReference>
<dbReference type="HOGENOM" id="CLU_089475_1_0_5"/>
<dbReference type="OrthoDB" id="9805051at2"/>
<dbReference type="GO" id="GO:0005829">
    <property type="term" value="C:cytosol"/>
    <property type="evidence" value="ECO:0007669"/>
    <property type="project" value="TreeGrafter"/>
</dbReference>
<dbReference type="GO" id="GO:0043024">
    <property type="term" value="F:ribosomal small subunit binding"/>
    <property type="evidence" value="ECO:0007669"/>
    <property type="project" value="TreeGrafter"/>
</dbReference>
<dbReference type="GO" id="GO:0030490">
    <property type="term" value="P:maturation of SSU-rRNA"/>
    <property type="evidence" value="ECO:0007669"/>
    <property type="project" value="UniProtKB-UniRule"/>
</dbReference>
<dbReference type="Gene3D" id="3.30.300.20">
    <property type="match status" value="1"/>
</dbReference>
<dbReference type="HAMAP" id="MF_00003">
    <property type="entry name" value="RbfA"/>
    <property type="match status" value="1"/>
</dbReference>
<dbReference type="InterPro" id="IPR015946">
    <property type="entry name" value="KH_dom-like_a/b"/>
</dbReference>
<dbReference type="InterPro" id="IPR000238">
    <property type="entry name" value="RbfA"/>
</dbReference>
<dbReference type="InterPro" id="IPR023799">
    <property type="entry name" value="RbfA_dom_sf"/>
</dbReference>
<dbReference type="InterPro" id="IPR020053">
    <property type="entry name" value="Ribosome-bd_factorA_CS"/>
</dbReference>
<dbReference type="NCBIfam" id="NF001802">
    <property type="entry name" value="PRK00521.2-5"/>
    <property type="match status" value="1"/>
</dbReference>
<dbReference type="NCBIfam" id="TIGR00082">
    <property type="entry name" value="rbfA"/>
    <property type="match status" value="1"/>
</dbReference>
<dbReference type="PANTHER" id="PTHR33515">
    <property type="entry name" value="RIBOSOME-BINDING FACTOR A, CHLOROPLASTIC-RELATED"/>
    <property type="match status" value="1"/>
</dbReference>
<dbReference type="PANTHER" id="PTHR33515:SF1">
    <property type="entry name" value="RIBOSOME-BINDING FACTOR A, CHLOROPLASTIC-RELATED"/>
    <property type="match status" value="1"/>
</dbReference>
<dbReference type="Pfam" id="PF02033">
    <property type="entry name" value="RBFA"/>
    <property type="match status" value="1"/>
</dbReference>
<dbReference type="SUPFAM" id="SSF89919">
    <property type="entry name" value="Ribosome-binding factor A, RbfA"/>
    <property type="match status" value="1"/>
</dbReference>
<dbReference type="PROSITE" id="PS01319">
    <property type="entry name" value="RBFA"/>
    <property type="match status" value="1"/>
</dbReference>
<accession>Q21C30</accession>
<reference key="1">
    <citation type="submission" date="2006-03" db="EMBL/GenBank/DDBJ databases">
        <title>Complete sequence of Rhodopseudomonas palustris BisB18.</title>
        <authorList>
            <consortium name="US DOE Joint Genome Institute"/>
            <person name="Copeland A."/>
            <person name="Lucas S."/>
            <person name="Lapidus A."/>
            <person name="Barry K."/>
            <person name="Detter J.C."/>
            <person name="Glavina del Rio T."/>
            <person name="Hammon N."/>
            <person name="Israni S."/>
            <person name="Dalin E."/>
            <person name="Tice H."/>
            <person name="Pitluck S."/>
            <person name="Chain P."/>
            <person name="Malfatti S."/>
            <person name="Shin M."/>
            <person name="Vergez L."/>
            <person name="Schmutz J."/>
            <person name="Larimer F."/>
            <person name="Land M."/>
            <person name="Hauser L."/>
            <person name="Pelletier D.A."/>
            <person name="Kyrpides N."/>
            <person name="Anderson I."/>
            <person name="Oda Y."/>
            <person name="Harwood C.S."/>
            <person name="Richardson P."/>
        </authorList>
    </citation>
    <scope>NUCLEOTIDE SEQUENCE [LARGE SCALE GENOMIC DNA]</scope>
    <source>
        <strain>BisB18</strain>
    </source>
</reference>
<gene>
    <name evidence="1" type="primary">rbfA</name>
    <name type="ordered locus">RPC_0481</name>
</gene>
<protein>
    <recommendedName>
        <fullName evidence="1">Ribosome-binding factor A</fullName>
    </recommendedName>
</protein>
<comment type="function">
    <text evidence="1">One of several proteins that assist in the late maturation steps of the functional core of the 30S ribosomal subunit. Associates with free 30S ribosomal subunits (but not with 30S subunits that are part of 70S ribosomes or polysomes). Required for efficient processing of 16S rRNA. May interact with the 5'-terminal helix region of 16S rRNA.</text>
</comment>
<comment type="subunit">
    <text evidence="1">Monomer. Binds 30S ribosomal subunits, but not 50S ribosomal subunits or 70S ribosomes.</text>
</comment>
<comment type="subcellular location">
    <subcellularLocation>
        <location evidence="1">Cytoplasm</location>
    </subcellularLocation>
</comment>
<comment type="similarity">
    <text evidence="1">Belongs to the RbfA family.</text>
</comment>
<sequence>MPKHHQKAQSPGGSQRQLRVGEIVRHAVAELLSQGGVHDPVLEGHLITVPEVRMSPDLKLATVYVMPLGGRDTDVVLKALAANKPFIRTAVARRVNLKFAPDLRFRIDERFDEAERIEKLLRTPGVQKDLQQDSDET</sequence>
<feature type="chain" id="PRO_1000000190" description="Ribosome-binding factor A">
    <location>
        <begin position="1"/>
        <end position="137"/>
    </location>
</feature>
<name>RBFA_RHOPB</name>
<proteinExistence type="inferred from homology"/>
<keyword id="KW-0963">Cytoplasm</keyword>
<keyword id="KW-0690">Ribosome biogenesis</keyword>
<evidence type="ECO:0000255" key="1">
    <source>
        <dbReference type="HAMAP-Rule" id="MF_00003"/>
    </source>
</evidence>
<organism>
    <name type="scientific">Rhodopseudomonas palustris (strain BisB18)</name>
    <dbReference type="NCBI Taxonomy" id="316056"/>
    <lineage>
        <taxon>Bacteria</taxon>
        <taxon>Pseudomonadati</taxon>
        <taxon>Pseudomonadota</taxon>
        <taxon>Alphaproteobacteria</taxon>
        <taxon>Hyphomicrobiales</taxon>
        <taxon>Nitrobacteraceae</taxon>
        <taxon>Rhodopseudomonas</taxon>
    </lineage>
</organism>